<dbReference type="EC" id="2.4.1.227" evidence="1"/>
<dbReference type="EMBL" id="FM178379">
    <property type="protein sequence ID" value="CAQ80328.1"/>
    <property type="molecule type" value="Genomic_DNA"/>
</dbReference>
<dbReference type="RefSeq" id="WP_012551099.1">
    <property type="nucleotide sequence ID" value="NC_011312.1"/>
</dbReference>
<dbReference type="SMR" id="B6ELH5"/>
<dbReference type="CAZy" id="GT28">
    <property type="family name" value="Glycosyltransferase Family 28"/>
</dbReference>
<dbReference type="KEGG" id="vsa:VSAL_I2644"/>
<dbReference type="eggNOG" id="COG0707">
    <property type="taxonomic scope" value="Bacteria"/>
</dbReference>
<dbReference type="HOGENOM" id="CLU_037404_2_0_6"/>
<dbReference type="UniPathway" id="UPA00219"/>
<dbReference type="Proteomes" id="UP000001730">
    <property type="component" value="Chromosome 1"/>
</dbReference>
<dbReference type="GO" id="GO:0005886">
    <property type="term" value="C:plasma membrane"/>
    <property type="evidence" value="ECO:0007669"/>
    <property type="project" value="UniProtKB-SubCell"/>
</dbReference>
<dbReference type="GO" id="GO:0051991">
    <property type="term" value="F:UDP-N-acetyl-D-glucosamine:N-acetylmuramoyl-L-alanyl-D-glutamyl-meso-2,6-diaminopimelyl-D-alanyl-D-alanine-diphosphoundecaprenol 4-beta-N-acetylglucosaminlytransferase activity"/>
    <property type="evidence" value="ECO:0007669"/>
    <property type="project" value="RHEA"/>
</dbReference>
<dbReference type="GO" id="GO:0050511">
    <property type="term" value="F:undecaprenyldiphospho-muramoylpentapeptide beta-N-acetylglucosaminyltransferase activity"/>
    <property type="evidence" value="ECO:0007669"/>
    <property type="project" value="UniProtKB-UniRule"/>
</dbReference>
<dbReference type="GO" id="GO:0005975">
    <property type="term" value="P:carbohydrate metabolic process"/>
    <property type="evidence" value="ECO:0007669"/>
    <property type="project" value="InterPro"/>
</dbReference>
<dbReference type="GO" id="GO:0051301">
    <property type="term" value="P:cell division"/>
    <property type="evidence" value="ECO:0007669"/>
    <property type="project" value="UniProtKB-KW"/>
</dbReference>
<dbReference type="GO" id="GO:0071555">
    <property type="term" value="P:cell wall organization"/>
    <property type="evidence" value="ECO:0007669"/>
    <property type="project" value="UniProtKB-KW"/>
</dbReference>
<dbReference type="GO" id="GO:0030259">
    <property type="term" value="P:lipid glycosylation"/>
    <property type="evidence" value="ECO:0007669"/>
    <property type="project" value="UniProtKB-UniRule"/>
</dbReference>
<dbReference type="GO" id="GO:0009252">
    <property type="term" value="P:peptidoglycan biosynthetic process"/>
    <property type="evidence" value="ECO:0007669"/>
    <property type="project" value="UniProtKB-UniRule"/>
</dbReference>
<dbReference type="GO" id="GO:0008360">
    <property type="term" value="P:regulation of cell shape"/>
    <property type="evidence" value="ECO:0007669"/>
    <property type="project" value="UniProtKB-KW"/>
</dbReference>
<dbReference type="CDD" id="cd03785">
    <property type="entry name" value="GT28_MurG"/>
    <property type="match status" value="1"/>
</dbReference>
<dbReference type="Gene3D" id="3.40.50.2000">
    <property type="entry name" value="Glycogen Phosphorylase B"/>
    <property type="match status" value="2"/>
</dbReference>
<dbReference type="HAMAP" id="MF_00033">
    <property type="entry name" value="MurG"/>
    <property type="match status" value="1"/>
</dbReference>
<dbReference type="InterPro" id="IPR006009">
    <property type="entry name" value="GlcNAc_MurG"/>
</dbReference>
<dbReference type="InterPro" id="IPR007235">
    <property type="entry name" value="Glyco_trans_28_C"/>
</dbReference>
<dbReference type="InterPro" id="IPR004276">
    <property type="entry name" value="GlycoTrans_28_N"/>
</dbReference>
<dbReference type="NCBIfam" id="TIGR01133">
    <property type="entry name" value="murG"/>
    <property type="match status" value="1"/>
</dbReference>
<dbReference type="PANTHER" id="PTHR21015:SF22">
    <property type="entry name" value="GLYCOSYLTRANSFERASE"/>
    <property type="match status" value="1"/>
</dbReference>
<dbReference type="PANTHER" id="PTHR21015">
    <property type="entry name" value="UDP-N-ACETYLGLUCOSAMINE--N-ACETYLMURAMYL-(PENTAPEPTIDE) PYROPHOSPHORYL-UNDECAPRENOL N-ACETYLGLUCOSAMINE TRANSFERASE 1"/>
    <property type="match status" value="1"/>
</dbReference>
<dbReference type="Pfam" id="PF04101">
    <property type="entry name" value="Glyco_tran_28_C"/>
    <property type="match status" value="1"/>
</dbReference>
<dbReference type="Pfam" id="PF03033">
    <property type="entry name" value="Glyco_transf_28"/>
    <property type="match status" value="1"/>
</dbReference>
<dbReference type="SUPFAM" id="SSF53756">
    <property type="entry name" value="UDP-Glycosyltransferase/glycogen phosphorylase"/>
    <property type="match status" value="1"/>
</dbReference>
<keyword id="KW-0131">Cell cycle</keyword>
<keyword id="KW-0132">Cell division</keyword>
<keyword id="KW-0997">Cell inner membrane</keyword>
<keyword id="KW-1003">Cell membrane</keyword>
<keyword id="KW-0133">Cell shape</keyword>
<keyword id="KW-0961">Cell wall biogenesis/degradation</keyword>
<keyword id="KW-0328">Glycosyltransferase</keyword>
<keyword id="KW-0472">Membrane</keyword>
<keyword id="KW-0573">Peptidoglycan synthesis</keyword>
<keyword id="KW-0808">Transferase</keyword>
<evidence type="ECO:0000255" key="1">
    <source>
        <dbReference type="HAMAP-Rule" id="MF_00033"/>
    </source>
</evidence>
<gene>
    <name evidence="1" type="primary">murG</name>
    <name type="ordered locus">VSAL_I2644</name>
</gene>
<name>MURG_ALISL</name>
<sequence length="354" mass="38127">MKNKNKRLLVMAGGTGGHVFPGLAVAKQLQSEGWEIRWLGTEDRMEADLVPKHGIEIDFIKVKGLRGQGLKKLLIAPFQIIGAILQAKKHIQAWQPDVVLGMGGYVSGPGGIAAWLSGIPVVLHEQNAVAGLTNQWLSKIAKRVFQAFPGAFPNADVVGNPVREDVCQLPHPSERFAERNGPIRVLIMGGSQGARILNATLPEVLPKLNHSVEIWHQAGKGNQETVNNAYKDNGITDAKVTEFIDDVAAAYAWADVLVCRSGALTVSEVSAAGVGSVFIPFMHKDRQQALNADHLVQCGAAKMIEQQDLTVQSLVDTLNGLERPKLLEMACNARNAAIIDADVRVATAIKSLAK</sequence>
<comment type="function">
    <text evidence="1">Cell wall formation. Catalyzes the transfer of a GlcNAc subunit on undecaprenyl-pyrophosphoryl-MurNAc-pentapeptide (lipid intermediate I) to form undecaprenyl-pyrophosphoryl-MurNAc-(pentapeptide)GlcNAc (lipid intermediate II).</text>
</comment>
<comment type="catalytic activity">
    <reaction evidence="1">
        <text>di-trans,octa-cis-undecaprenyl diphospho-N-acetyl-alpha-D-muramoyl-L-alanyl-D-glutamyl-meso-2,6-diaminopimeloyl-D-alanyl-D-alanine + UDP-N-acetyl-alpha-D-glucosamine = di-trans,octa-cis-undecaprenyl diphospho-[N-acetyl-alpha-D-glucosaminyl-(1-&gt;4)]-N-acetyl-alpha-D-muramoyl-L-alanyl-D-glutamyl-meso-2,6-diaminopimeloyl-D-alanyl-D-alanine + UDP + H(+)</text>
        <dbReference type="Rhea" id="RHEA:31227"/>
        <dbReference type="ChEBI" id="CHEBI:15378"/>
        <dbReference type="ChEBI" id="CHEBI:57705"/>
        <dbReference type="ChEBI" id="CHEBI:58223"/>
        <dbReference type="ChEBI" id="CHEBI:61387"/>
        <dbReference type="ChEBI" id="CHEBI:61388"/>
        <dbReference type="EC" id="2.4.1.227"/>
    </reaction>
</comment>
<comment type="pathway">
    <text evidence="1">Cell wall biogenesis; peptidoglycan biosynthesis.</text>
</comment>
<comment type="subcellular location">
    <subcellularLocation>
        <location evidence="1">Cell inner membrane</location>
        <topology evidence="1">Peripheral membrane protein</topology>
        <orientation evidence="1">Cytoplasmic side</orientation>
    </subcellularLocation>
</comment>
<comment type="similarity">
    <text evidence="1">Belongs to the glycosyltransferase 28 family. MurG subfamily.</text>
</comment>
<accession>B6ELH5</accession>
<protein>
    <recommendedName>
        <fullName evidence="1">UDP-N-acetylglucosamine--N-acetylmuramyl-(pentapeptide) pyrophosphoryl-undecaprenol N-acetylglucosamine transferase</fullName>
        <ecNumber evidence="1">2.4.1.227</ecNumber>
    </recommendedName>
    <alternativeName>
        <fullName evidence="1">Undecaprenyl-PP-MurNAc-pentapeptide-UDPGlcNAc GlcNAc transferase</fullName>
    </alternativeName>
</protein>
<proteinExistence type="inferred from homology"/>
<reference key="1">
    <citation type="journal article" date="2008" name="BMC Genomics">
        <title>The genome sequence of the fish pathogen Aliivibrio salmonicida strain LFI1238 shows extensive evidence of gene decay.</title>
        <authorList>
            <person name="Hjerde E."/>
            <person name="Lorentzen M.S."/>
            <person name="Holden M.T."/>
            <person name="Seeger K."/>
            <person name="Paulsen S."/>
            <person name="Bason N."/>
            <person name="Churcher C."/>
            <person name="Harris D."/>
            <person name="Norbertczak H."/>
            <person name="Quail M.A."/>
            <person name="Sanders S."/>
            <person name="Thurston S."/>
            <person name="Parkhill J."/>
            <person name="Willassen N.P."/>
            <person name="Thomson N.R."/>
        </authorList>
    </citation>
    <scope>NUCLEOTIDE SEQUENCE [LARGE SCALE GENOMIC DNA]</scope>
    <source>
        <strain>LFI1238</strain>
    </source>
</reference>
<feature type="chain" id="PRO_1000090402" description="UDP-N-acetylglucosamine--N-acetylmuramyl-(pentapeptide) pyrophosphoryl-undecaprenol N-acetylglucosamine transferase">
    <location>
        <begin position="1"/>
        <end position="354"/>
    </location>
</feature>
<feature type="binding site" evidence="1">
    <location>
        <begin position="15"/>
        <end position="17"/>
    </location>
    <ligand>
        <name>UDP-N-acetyl-alpha-D-glucosamine</name>
        <dbReference type="ChEBI" id="CHEBI:57705"/>
    </ligand>
</feature>
<feature type="binding site" evidence="1">
    <location>
        <position position="127"/>
    </location>
    <ligand>
        <name>UDP-N-acetyl-alpha-D-glucosamine</name>
        <dbReference type="ChEBI" id="CHEBI:57705"/>
    </ligand>
</feature>
<feature type="binding site" evidence="1">
    <location>
        <position position="163"/>
    </location>
    <ligand>
        <name>UDP-N-acetyl-alpha-D-glucosamine</name>
        <dbReference type="ChEBI" id="CHEBI:57705"/>
    </ligand>
</feature>
<feature type="binding site" evidence="1">
    <location>
        <position position="191"/>
    </location>
    <ligand>
        <name>UDP-N-acetyl-alpha-D-glucosamine</name>
        <dbReference type="ChEBI" id="CHEBI:57705"/>
    </ligand>
</feature>
<feature type="binding site" evidence="1">
    <location>
        <position position="244"/>
    </location>
    <ligand>
        <name>UDP-N-acetyl-alpha-D-glucosamine</name>
        <dbReference type="ChEBI" id="CHEBI:57705"/>
    </ligand>
</feature>
<feature type="binding site" evidence="1">
    <location>
        <begin position="263"/>
        <end position="268"/>
    </location>
    <ligand>
        <name>UDP-N-acetyl-alpha-D-glucosamine</name>
        <dbReference type="ChEBI" id="CHEBI:57705"/>
    </ligand>
</feature>
<feature type="binding site" evidence="1">
    <location>
        <position position="288"/>
    </location>
    <ligand>
        <name>UDP-N-acetyl-alpha-D-glucosamine</name>
        <dbReference type="ChEBI" id="CHEBI:57705"/>
    </ligand>
</feature>
<organism>
    <name type="scientific">Aliivibrio salmonicida (strain LFI1238)</name>
    <name type="common">Vibrio salmonicida (strain LFI1238)</name>
    <dbReference type="NCBI Taxonomy" id="316275"/>
    <lineage>
        <taxon>Bacteria</taxon>
        <taxon>Pseudomonadati</taxon>
        <taxon>Pseudomonadota</taxon>
        <taxon>Gammaproteobacteria</taxon>
        <taxon>Vibrionales</taxon>
        <taxon>Vibrionaceae</taxon>
        <taxon>Aliivibrio</taxon>
    </lineage>
</organism>